<keyword id="KW-0963">Cytoplasm</keyword>
<keyword id="KW-0251">Elongation factor</keyword>
<keyword id="KW-0648">Protein biosynthesis</keyword>
<keyword id="KW-1185">Reference proteome</keyword>
<accession>B1VAJ8</accession>
<comment type="function">
    <text evidence="1">Involved in peptide bond synthesis. Stimulates efficient translation and peptide-bond synthesis on native or reconstituted 70S ribosomes in vitro. Probably functions indirectly by altering the affinity of the ribosome for aminoacyl-tRNA, thus increasing their reactivity as acceptors for peptidyl transferase.</text>
</comment>
<comment type="pathway">
    <text evidence="1">Protein biosynthesis; polypeptide chain elongation.</text>
</comment>
<comment type="subcellular location">
    <subcellularLocation>
        <location evidence="1">Cytoplasm</location>
    </subcellularLocation>
</comment>
<comment type="similarity">
    <text evidence="1">Belongs to the elongation factor P family.</text>
</comment>
<protein>
    <recommendedName>
        <fullName evidence="1">Elongation factor P</fullName>
        <shortName evidence="1">EF-P</shortName>
    </recommendedName>
</protein>
<organism>
    <name type="scientific">Phytoplasma australiense</name>
    <dbReference type="NCBI Taxonomy" id="59748"/>
    <lineage>
        <taxon>Bacteria</taxon>
        <taxon>Bacillati</taxon>
        <taxon>Mycoplasmatota</taxon>
        <taxon>Mollicutes</taxon>
        <taxon>Acholeplasmatales</taxon>
        <taxon>Acholeplasmataceae</taxon>
        <taxon>Candidatus Phytoplasma</taxon>
        <taxon>16SrXII (Stolbur group)</taxon>
    </lineage>
</organism>
<feature type="chain" id="PRO_1000117903" description="Elongation factor P">
    <location>
        <begin position="1"/>
        <end position="189"/>
    </location>
</feature>
<dbReference type="EMBL" id="AM422018">
    <property type="protein sequence ID" value="CAM11971.1"/>
    <property type="molecule type" value="Genomic_DNA"/>
</dbReference>
<dbReference type="SMR" id="B1VAJ8"/>
<dbReference type="STRING" id="59748.PA0637"/>
<dbReference type="KEGG" id="pal:PA0637"/>
<dbReference type="eggNOG" id="COG0231">
    <property type="taxonomic scope" value="Bacteria"/>
</dbReference>
<dbReference type="UniPathway" id="UPA00345"/>
<dbReference type="Proteomes" id="UP000008323">
    <property type="component" value="Chromosome"/>
</dbReference>
<dbReference type="GO" id="GO:0005737">
    <property type="term" value="C:cytoplasm"/>
    <property type="evidence" value="ECO:0007669"/>
    <property type="project" value="UniProtKB-SubCell"/>
</dbReference>
<dbReference type="GO" id="GO:0003746">
    <property type="term" value="F:translation elongation factor activity"/>
    <property type="evidence" value="ECO:0007669"/>
    <property type="project" value="UniProtKB-UniRule"/>
</dbReference>
<dbReference type="GO" id="GO:0043043">
    <property type="term" value="P:peptide biosynthetic process"/>
    <property type="evidence" value="ECO:0007669"/>
    <property type="project" value="InterPro"/>
</dbReference>
<dbReference type="CDD" id="cd04470">
    <property type="entry name" value="S1_EF-P_repeat_1"/>
    <property type="match status" value="1"/>
</dbReference>
<dbReference type="CDD" id="cd05794">
    <property type="entry name" value="S1_EF-P_repeat_2"/>
    <property type="match status" value="1"/>
</dbReference>
<dbReference type="FunFam" id="2.30.30.30:FF:000003">
    <property type="entry name" value="Elongation factor P"/>
    <property type="match status" value="1"/>
</dbReference>
<dbReference type="FunFam" id="2.40.50.140:FF:000004">
    <property type="entry name" value="Elongation factor P"/>
    <property type="match status" value="1"/>
</dbReference>
<dbReference type="FunFam" id="2.40.50.140:FF:000009">
    <property type="entry name" value="Elongation factor P"/>
    <property type="match status" value="1"/>
</dbReference>
<dbReference type="Gene3D" id="2.30.30.30">
    <property type="match status" value="1"/>
</dbReference>
<dbReference type="Gene3D" id="2.40.50.140">
    <property type="entry name" value="Nucleic acid-binding proteins"/>
    <property type="match status" value="2"/>
</dbReference>
<dbReference type="HAMAP" id="MF_00141">
    <property type="entry name" value="EF_P"/>
    <property type="match status" value="1"/>
</dbReference>
<dbReference type="InterPro" id="IPR015365">
    <property type="entry name" value="Elong-fact-P_C"/>
</dbReference>
<dbReference type="InterPro" id="IPR012340">
    <property type="entry name" value="NA-bd_OB-fold"/>
</dbReference>
<dbReference type="InterPro" id="IPR014722">
    <property type="entry name" value="Rib_uL2_dom2"/>
</dbReference>
<dbReference type="InterPro" id="IPR020599">
    <property type="entry name" value="Transl_elong_fac_P/YeiP"/>
</dbReference>
<dbReference type="InterPro" id="IPR013185">
    <property type="entry name" value="Transl_elong_KOW-like"/>
</dbReference>
<dbReference type="InterPro" id="IPR001059">
    <property type="entry name" value="Transl_elong_P/YeiP_cen"/>
</dbReference>
<dbReference type="InterPro" id="IPR013852">
    <property type="entry name" value="Transl_elong_P/YeiP_CS"/>
</dbReference>
<dbReference type="InterPro" id="IPR011768">
    <property type="entry name" value="Transl_elongation_fac_P"/>
</dbReference>
<dbReference type="InterPro" id="IPR008991">
    <property type="entry name" value="Translation_prot_SH3-like_sf"/>
</dbReference>
<dbReference type="NCBIfam" id="TIGR00038">
    <property type="entry name" value="efp"/>
    <property type="match status" value="1"/>
</dbReference>
<dbReference type="NCBIfam" id="NF001810">
    <property type="entry name" value="PRK00529.1"/>
    <property type="match status" value="1"/>
</dbReference>
<dbReference type="PANTHER" id="PTHR30053">
    <property type="entry name" value="ELONGATION FACTOR P"/>
    <property type="match status" value="1"/>
</dbReference>
<dbReference type="PANTHER" id="PTHR30053:SF12">
    <property type="entry name" value="ELONGATION FACTOR P (EF-P) FAMILY PROTEIN"/>
    <property type="match status" value="1"/>
</dbReference>
<dbReference type="Pfam" id="PF01132">
    <property type="entry name" value="EFP"/>
    <property type="match status" value="1"/>
</dbReference>
<dbReference type="Pfam" id="PF08207">
    <property type="entry name" value="EFP_N"/>
    <property type="match status" value="1"/>
</dbReference>
<dbReference type="Pfam" id="PF09285">
    <property type="entry name" value="Elong-fact-P_C"/>
    <property type="match status" value="1"/>
</dbReference>
<dbReference type="PIRSF" id="PIRSF005901">
    <property type="entry name" value="EF-P"/>
    <property type="match status" value="1"/>
</dbReference>
<dbReference type="SMART" id="SM01185">
    <property type="entry name" value="EFP"/>
    <property type="match status" value="1"/>
</dbReference>
<dbReference type="SMART" id="SM00841">
    <property type="entry name" value="Elong-fact-P_C"/>
    <property type="match status" value="1"/>
</dbReference>
<dbReference type="SUPFAM" id="SSF50249">
    <property type="entry name" value="Nucleic acid-binding proteins"/>
    <property type="match status" value="2"/>
</dbReference>
<dbReference type="SUPFAM" id="SSF50104">
    <property type="entry name" value="Translation proteins SH3-like domain"/>
    <property type="match status" value="1"/>
</dbReference>
<dbReference type="PROSITE" id="PS01275">
    <property type="entry name" value="EFP"/>
    <property type="match status" value="1"/>
</dbReference>
<name>EFP_PHYAS</name>
<evidence type="ECO:0000255" key="1">
    <source>
        <dbReference type="HAMAP-Rule" id="MF_00141"/>
    </source>
</evidence>
<proteinExistence type="inferred from homology"/>
<reference key="1">
    <citation type="journal article" date="2008" name="J. Bacteriol.">
        <title>Comparative genome analysis of 'Candidatus Phytoplasma australiense' (subgroup tuf-Australia I; rp-A) and 'Ca. Phytoplasma asteris' strains OY-M and AY-WB.</title>
        <authorList>
            <person name="Tran-Nguyen L.T."/>
            <person name="Kube M."/>
            <person name="Schneider B."/>
            <person name="Reinhardt R."/>
            <person name="Gibb K.S."/>
        </authorList>
    </citation>
    <scope>NUCLEOTIDE SEQUENCE [LARGE SCALE GENOMIC DNA]</scope>
</reference>
<sequence length="189" mass="21703">MINTNDFKTGQTIKFNNQIYQIIEFLHVKPGKGTAFVRSKLRNLRTGSVIDHTFNAGIKLEPALINKIKMQFLYSSQEKYIFMNTQTYEQLEINKDQLKEKLHYLYEGLLVEIIFYNNNEILTISLPDKISLKVTYAEPGVKGDTKTNSFKDATLETGLVIKVPLFINTGEKIIVNTETGLYLSRDNNK</sequence>
<gene>
    <name evidence="1" type="primary">efp</name>
    <name type="ordered locus">PA0637</name>
</gene>